<gene>
    <name evidence="1" type="primary">pncB</name>
    <name type="ordered locus">PputGB1_4924</name>
</gene>
<dbReference type="EC" id="6.3.4.21" evidence="1"/>
<dbReference type="EMBL" id="CP000926">
    <property type="protein sequence ID" value="ABZ00809.1"/>
    <property type="molecule type" value="Genomic_DNA"/>
</dbReference>
<dbReference type="RefSeq" id="WP_012274438.1">
    <property type="nucleotide sequence ID" value="NC_010322.1"/>
</dbReference>
<dbReference type="SMR" id="B0KKX3"/>
<dbReference type="KEGG" id="ppg:PputGB1_4924"/>
<dbReference type="eggNOG" id="COG1488">
    <property type="taxonomic scope" value="Bacteria"/>
</dbReference>
<dbReference type="HOGENOM" id="CLU_030991_1_0_6"/>
<dbReference type="UniPathway" id="UPA00253">
    <property type="reaction ID" value="UER00457"/>
</dbReference>
<dbReference type="Proteomes" id="UP000002157">
    <property type="component" value="Chromosome"/>
</dbReference>
<dbReference type="GO" id="GO:0005829">
    <property type="term" value="C:cytosol"/>
    <property type="evidence" value="ECO:0007669"/>
    <property type="project" value="TreeGrafter"/>
</dbReference>
<dbReference type="GO" id="GO:0004516">
    <property type="term" value="F:nicotinate phosphoribosyltransferase activity"/>
    <property type="evidence" value="ECO:0007669"/>
    <property type="project" value="UniProtKB-UniRule"/>
</dbReference>
<dbReference type="GO" id="GO:0034355">
    <property type="term" value="P:NAD biosynthetic process via the salvage pathway"/>
    <property type="evidence" value="ECO:0007669"/>
    <property type="project" value="TreeGrafter"/>
</dbReference>
<dbReference type="CDD" id="cd01401">
    <property type="entry name" value="PncB_like"/>
    <property type="match status" value="1"/>
</dbReference>
<dbReference type="Gene3D" id="3.20.140.10">
    <property type="entry name" value="nicotinate phosphoribosyltransferase"/>
    <property type="match status" value="1"/>
</dbReference>
<dbReference type="HAMAP" id="MF_00570">
    <property type="entry name" value="NAPRTase"/>
    <property type="match status" value="1"/>
</dbReference>
<dbReference type="InterPro" id="IPR041525">
    <property type="entry name" value="N/Namide_PRibTrfase"/>
</dbReference>
<dbReference type="InterPro" id="IPR040727">
    <property type="entry name" value="NAPRTase_N"/>
</dbReference>
<dbReference type="InterPro" id="IPR006406">
    <property type="entry name" value="Nic_PRibTrfase"/>
</dbReference>
<dbReference type="InterPro" id="IPR007229">
    <property type="entry name" value="Nic_PRibTrfase-Fam"/>
</dbReference>
<dbReference type="InterPro" id="IPR036068">
    <property type="entry name" value="Nicotinate_pribotase-like_C"/>
</dbReference>
<dbReference type="NCBIfam" id="TIGR01514">
    <property type="entry name" value="NAPRTase"/>
    <property type="match status" value="1"/>
</dbReference>
<dbReference type="NCBIfam" id="NF003704">
    <property type="entry name" value="PRK05321.1"/>
    <property type="match status" value="1"/>
</dbReference>
<dbReference type="PANTHER" id="PTHR11098">
    <property type="entry name" value="NICOTINATE PHOSPHORIBOSYLTRANSFERASE"/>
    <property type="match status" value="1"/>
</dbReference>
<dbReference type="PANTHER" id="PTHR11098:SF1">
    <property type="entry name" value="NICOTINATE PHOSPHORIBOSYLTRANSFERASE"/>
    <property type="match status" value="1"/>
</dbReference>
<dbReference type="Pfam" id="PF04095">
    <property type="entry name" value="NAPRTase"/>
    <property type="match status" value="1"/>
</dbReference>
<dbReference type="Pfam" id="PF17767">
    <property type="entry name" value="NAPRTase_N"/>
    <property type="match status" value="1"/>
</dbReference>
<dbReference type="PIRSF" id="PIRSF000484">
    <property type="entry name" value="NAPRT"/>
    <property type="match status" value="1"/>
</dbReference>
<dbReference type="SUPFAM" id="SSF51690">
    <property type="entry name" value="Nicotinate/Quinolinate PRTase C-terminal domain-like"/>
    <property type="match status" value="1"/>
</dbReference>
<dbReference type="SUPFAM" id="SSF54675">
    <property type="entry name" value="Nicotinate/Quinolinate PRTase N-terminal domain-like"/>
    <property type="match status" value="1"/>
</dbReference>
<feature type="chain" id="PRO_1000082326" description="Nicotinate phosphoribosyltransferase">
    <location>
        <begin position="1"/>
        <end position="401"/>
    </location>
</feature>
<feature type="modified residue" description="Phosphohistidine; by autocatalysis" evidence="1">
    <location>
        <position position="224"/>
    </location>
</feature>
<protein>
    <recommendedName>
        <fullName evidence="1">Nicotinate phosphoribosyltransferase</fullName>
        <shortName evidence="1">NAPRTase</shortName>
        <ecNumber evidence="1">6.3.4.21</ecNumber>
    </recommendedName>
</protein>
<organism>
    <name type="scientific">Pseudomonas putida (strain GB-1)</name>
    <dbReference type="NCBI Taxonomy" id="76869"/>
    <lineage>
        <taxon>Bacteria</taxon>
        <taxon>Pseudomonadati</taxon>
        <taxon>Pseudomonadota</taxon>
        <taxon>Gammaproteobacteria</taxon>
        <taxon>Pseudomonadales</taxon>
        <taxon>Pseudomonadaceae</taxon>
        <taxon>Pseudomonas</taxon>
    </lineage>
</organism>
<keyword id="KW-0436">Ligase</keyword>
<keyword id="KW-0597">Phosphoprotein</keyword>
<keyword id="KW-0662">Pyridine nucleotide biosynthesis</keyword>
<name>PNCB_PSEPG</name>
<sequence>MSESAFAERIVHNLLDTDFYKLTMMQGVLHNYPDADVEWEFRCRNGEDLRPYLGEIRNQLERLNDLTLDDGQLPFLERISFLKPDFLRFLRLFRFNLRYVRVGIENDQLFLRLKGPWLHVILFEVPLLAIISEVRNRQLHPHMRLAEARDQLYRKFDWLRAHASDEELAELQVADFGTRRRFSSRVQEEVVRVLRDDFPARFVGTSNVDLAWKLDIKPLGTMAHEWIMAHQQLGPRLIDSQIAALDCWVREYRGLLGIALTDCITMDAFLGDFDLYFAKLFDGLRHDSGEPVAWAEKAIAHYQKLGIDPMTKTLVFSDGLNLTRSLEIFRALRGRINVSFGIGTNLTCDIPGVAPMSIVLKMTDCNGAPVAKISDEAAKTQCRDENFVAYMRHVFKVPSKE</sequence>
<comment type="function">
    <text evidence="1">Catalyzes the synthesis of beta-nicotinate D-ribonucleotide from nicotinate and 5-phospho-D-ribose 1-phosphate at the expense of ATP.</text>
</comment>
<comment type="catalytic activity">
    <reaction evidence="1">
        <text>nicotinate + 5-phospho-alpha-D-ribose 1-diphosphate + ATP + H2O = nicotinate beta-D-ribonucleotide + ADP + phosphate + diphosphate</text>
        <dbReference type="Rhea" id="RHEA:36163"/>
        <dbReference type="ChEBI" id="CHEBI:15377"/>
        <dbReference type="ChEBI" id="CHEBI:30616"/>
        <dbReference type="ChEBI" id="CHEBI:32544"/>
        <dbReference type="ChEBI" id="CHEBI:33019"/>
        <dbReference type="ChEBI" id="CHEBI:43474"/>
        <dbReference type="ChEBI" id="CHEBI:57502"/>
        <dbReference type="ChEBI" id="CHEBI:58017"/>
        <dbReference type="ChEBI" id="CHEBI:456216"/>
        <dbReference type="EC" id="6.3.4.21"/>
    </reaction>
</comment>
<comment type="pathway">
    <text evidence="1">Cofactor biosynthesis; NAD(+) biosynthesis; nicotinate D-ribonucleotide from nicotinate: step 1/1.</text>
</comment>
<comment type="PTM">
    <text evidence="1">Transiently phosphorylated on a His residue during the reaction cycle. Phosphorylation strongly increases the affinity for substrates and increases the rate of nicotinate D-ribonucleotide production. Dephosphorylation regenerates the low-affinity form of the enzyme, leading to product release.</text>
</comment>
<comment type="similarity">
    <text evidence="1">Belongs to the NAPRTase family.</text>
</comment>
<reference key="1">
    <citation type="submission" date="2008-01" db="EMBL/GenBank/DDBJ databases">
        <title>Complete sequence of Pseudomonas putida GB-1.</title>
        <authorList>
            <consortium name="US DOE Joint Genome Institute"/>
            <person name="Copeland A."/>
            <person name="Lucas S."/>
            <person name="Lapidus A."/>
            <person name="Barry K."/>
            <person name="Glavina del Rio T."/>
            <person name="Dalin E."/>
            <person name="Tice H."/>
            <person name="Pitluck S."/>
            <person name="Bruce D."/>
            <person name="Goodwin L."/>
            <person name="Chertkov O."/>
            <person name="Brettin T."/>
            <person name="Detter J.C."/>
            <person name="Han C."/>
            <person name="Kuske C.R."/>
            <person name="Schmutz J."/>
            <person name="Larimer F."/>
            <person name="Land M."/>
            <person name="Hauser L."/>
            <person name="Kyrpides N."/>
            <person name="Kim E."/>
            <person name="McCarthy J.K."/>
            <person name="Richardson P."/>
        </authorList>
    </citation>
    <scope>NUCLEOTIDE SEQUENCE [LARGE SCALE GENOMIC DNA]</scope>
    <source>
        <strain>GB-1</strain>
    </source>
</reference>
<evidence type="ECO:0000255" key="1">
    <source>
        <dbReference type="HAMAP-Rule" id="MF_00570"/>
    </source>
</evidence>
<accession>B0KKX3</accession>
<proteinExistence type="inferred from homology"/>